<name>SYA_BORGP</name>
<accession>Q662E4</accession>
<gene>
    <name type="primary">alaS</name>
    <name type="ordered locus">BG0223</name>
</gene>
<proteinExistence type="inferred from homology"/>
<dbReference type="EC" id="6.1.1.7"/>
<dbReference type="EMBL" id="CP000013">
    <property type="protein sequence ID" value="AAU07077.1"/>
    <property type="molecule type" value="Genomic_DNA"/>
</dbReference>
<dbReference type="RefSeq" id="WP_011193565.1">
    <property type="nucleotide sequence ID" value="NZ_CP028872.1"/>
</dbReference>
<dbReference type="SMR" id="Q662E4"/>
<dbReference type="GeneID" id="45161014"/>
<dbReference type="KEGG" id="bga:BG0223"/>
<dbReference type="eggNOG" id="COG0013">
    <property type="taxonomic scope" value="Bacteria"/>
</dbReference>
<dbReference type="HOGENOM" id="CLU_004485_0_2_12"/>
<dbReference type="OrthoDB" id="9803884at2"/>
<dbReference type="Proteomes" id="UP000002276">
    <property type="component" value="Chromosome"/>
</dbReference>
<dbReference type="GO" id="GO:0005829">
    <property type="term" value="C:cytosol"/>
    <property type="evidence" value="ECO:0007669"/>
    <property type="project" value="TreeGrafter"/>
</dbReference>
<dbReference type="GO" id="GO:0004813">
    <property type="term" value="F:alanine-tRNA ligase activity"/>
    <property type="evidence" value="ECO:0007669"/>
    <property type="project" value="UniProtKB-UniRule"/>
</dbReference>
<dbReference type="GO" id="GO:0002161">
    <property type="term" value="F:aminoacyl-tRNA deacylase activity"/>
    <property type="evidence" value="ECO:0007669"/>
    <property type="project" value="TreeGrafter"/>
</dbReference>
<dbReference type="GO" id="GO:0005524">
    <property type="term" value="F:ATP binding"/>
    <property type="evidence" value="ECO:0007669"/>
    <property type="project" value="UniProtKB-UniRule"/>
</dbReference>
<dbReference type="GO" id="GO:0000049">
    <property type="term" value="F:tRNA binding"/>
    <property type="evidence" value="ECO:0007669"/>
    <property type="project" value="UniProtKB-KW"/>
</dbReference>
<dbReference type="GO" id="GO:0008270">
    <property type="term" value="F:zinc ion binding"/>
    <property type="evidence" value="ECO:0007669"/>
    <property type="project" value="UniProtKB-UniRule"/>
</dbReference>
<dbReference type="GO" id="GO:0006419">
    <property type="term" value="P:alanyl-tRNA aminoacylation"/>
    <property type="evidence" value="ECO:0007669"/>
    <property type="project" value="UniProtKB-UniRule"/>
</dbReference>
<dbReference type="CDD" id="cd00673">
    <property type="entry name" value="AlaRS_core"/>
    <property type="match status" value="1"/>
</dbReference>
<dbReference type="FunFam" id="3.30.980.10:FF:000004">
    <property type="entry name" value="Alanine--tRNA ligase, cytoplasmic"/>
    <property type="match status" value="1"/>
</dbReference>
<dbReference type="Gene3D" id="3.30.54.20">
    <property type="match status" value="1"/>
</dbReference>
<dbReference type="Gene3D" id="3.30.930.10">
    <property type="entry name" value="Bira Bifunctional Protein, Domain 2"/>
    <property type="match status" value="1"/>
</dbReference>
<dbReference type="Gene3D" id="3.30.980.10">
    <property type="entry name" value="Threonyl-trna Synthetase, Chain A, domain 2"/>
    <property type="match status" value="1"/>
</dbReference>
<dbReference type="HAMAP" id="MF_00036_B">
    <property type="entry name" value="Ala_tRNA_synth_B"/>
    <property type="match status" value="1"/>
</dbReference>
<dbReference type="InterPro" id="IPR045864">
    <property type="entry name" value="aa-tRNA-synth_II/BPL/LPL"/>
</dbReference>
<dbReference type="InterPro" id="IPR002318">
    <property type="entry name" value="Ala-tRNA-lgiase_IIc"/>
</dbReference>
<dbReference type="InterPro" id="IPR018162">
    <property type="entry name" value="Ala-tRNA-ligase_IIc_anticod-bd"/>
</dbReference>
<dbReference type="InterPro" id="IPR018165">
    <property type="entry name" value="Ala-tRNA-synth_IIc_core"/>
</dbReference>
<dbReference type="InterPro" id="IPR018164">
    <property type="entry name" value="Ala-tRNA-synth_IIc_N"/>
</dbReference>
<dbReference type="InterPro" id="IPR050058">
    <property type="entry name" value="Ala-tRNA_ligase"/>
</dbReference>
<dbReference type="InterPro" id="IPR023033">
    <property type="entry name" value="Ala_tRNA_ligase_euk/bac"/>
</dbReference>
<dbReference type="InterPro" id="IPR018163">
    <property type="entry name" value="Thr/Ala-tRNA-synth_IIc_edit"/>
</dbReference>
<dbReference type="InterPro" id="IPR012947">
    <property type="entry name" value="tRNA_SAD"/>
</dbReference>
<dbReference type="NCBIfam" id="NF002436">
    <property type="entry name" value="PRK01584.1"/>
    <property type="match status" value="1"/>
</dbReference>
<dbReference type="PANTHER" id="PTHR11777:SF9">
    <property type="entry name" value="ALANINE--TRNA LIGASE, CYTOPLASMIC"/>
    <property type="match status" value="1"/>
</dbReference>
<dbReference type="PANTHER" id="PTHR11777">
    <property type="entry name" value="ALANYL-TRNA SYNTHETASE"/>
    <property type="match status" value="1"/>
</dbReference>
<dbReference type="Pfam" id="PF01411">
    <property type="entry name" value="tRNA-synt_2c"/>
    <property type="match status" value="1"/>
</dbReference>
<dbReference type="Pfam" id="PF07973">
    <property type="entry name" value="tRNA_SAD"/>
    <property type="match status" value="1"/>
</dbReference>
<dbReference type="PRINTS" id="PR00980">
    <property type="entry name" value="TRNASYNTHALA"/>
</dbReference>
<dbReference type="SMART" id="SM00863">
    <property type="entry name" value="tRNA_SAD"/>
    <property type="match status" value="1"/>
</dbReference>
<dbReference type="SUPFAM" id="SSF55681">
    <property type="entry name" value="Class II aaRS and biotin synthetases"/>
    <property type="match status" value="1"/>
</dbReference>
<dbReference type="SUPFAM" id="SSF101353">
    <property type="entry name" value="Putative anticodon-binding domain of alanyl-tRNA synthetase (AlaRS)"/>
    <property type="match status" value="1"/>
</dbReference>
<dbReference type="SUPFAM" id="SSF55186">
    <property type="entry name" value="ThrRS/AlaRS common domain"/>
    <property type="match status" value="1"/>
</dbReference>
<dbReference type="PROSITE" id="PS50860">
    <property type="entry name" value="AA_TRNA_LIGASE_II_ALA"/>
    <property type="match status" value="1"/>
</dbReference>
<comment type="function">
    <text evidence="1">Catalyzes the attachment of alanine to tRNA(Ala) in a two-step reaction: alanine is first activated by ATP to form Ala-AMP and then transferred to the acceptor end of tRNA(Ala). Also edits incorrectly charged Ser-tRNA(Ala) and Gly-tRNA(Ala) via its editing domain (By similarity).</text>
</comment>
<comment type="catalytic activity">
    <reaction>
        <text>tRNA(Ala) + L-alanine + ATP = L-alanyl-tRNA(Ala) + AMP + diphosphate</text>
        <dbReference type="Rhea" id="RHEA:12540"/>
        <dbReference type="Rhea" id="RHEA-COMP:9657"/>
        <dbReference type="Rhea" id="RHEA-COMP:9923"/>
        <dbReference type="ChEBI" id="CHEBI:30616"/>
        <dbReference type="ChEBI" id="CHEBI:33019"/>
        <dbReference type="ChEBI" id="CHEBI:57972"/>
        <dbReference type="ChEBI" id="CHEBI:78442"/>
        <dbReference type="ChEBI" id="CHEBI:78497"/>
        <dbReference type="ChEBI" id="CHEBI:456215"/>
        <dbReference type="EC" id="6.1.1.7"/>
    </reaction>
</comment>
<comment type="cofactor">
    <cofactor evidence="1">
        <name>Zn(2+)</name>
        <dbReference type="ChEBI" id="CHEBI:29105"/>
    </cofactor>
    <text evidence="1">Binds 1 zinc ion per subunit.</text>
</comment>
<comment type="subcellular location">
    <subcellularLocation>
        <location evidence="1">Cytoplasm</location>
    </subcellularLocation>
</comment>
<comment type="domain">
    <text evidence="1">Consists of two domains; the N-terminal catalytic domain (in this organism this is shorter than usual) and the editing domain; the C-terminal C-Ala domain found in most orthologs is missing. The editing domain removes incorrectly charged amino acids (By similarity).</text>
</comment>
<comment type="similarity">
    <text evidence="3">Belongs to the class-II aminoacyl-tRNA synthetase family.</text>
</comment>
<feature type="chain" id="PRO_0000075073" description="Alanine--tRNA ligase">
    <location>
        <begin position="1"/>
        <end position="594"/>
    </location>
</feature>
<feature type="binding site" evidence="2">
    <location>
        <position position="456"/>
    </location>
    <ligand>
        <name>Zn(2+)</name>
        <dbReference type="ChEBI" id="CHEBI:29105"/>
    </ligand>
</feature>
<feature type="binding site" evidence="2">
    <location>
        <position position="460"/>
    </location>
    <ligand>
        <name>Zn(2+)</name>
        <dbReference type="ChEBI" id="CHEBI:29105"/>
    </ligand>
</feature>
<feature type="binding site" evidence="2">
    <location>
        <position position="558"/>
    </location>
    <ligand>
        <name>Zn(2+)</name>
        <dbReference type="ChEBI" id="CHEBI:29105"/>
    </ligand>
</feature>
<feature type="binding site" evidence="2">
    <location>
        <position position="562"/>
    </location>
    <ligand>
        <name>Zn(2+)</name>
        <dbReference type="ChEBI" id="CHEBI:29105"/>
    </ligand>
</feature>
<sequence length="594" mass="67664">MTLDKLRKKYIDFFKSKKHFEIMGKSLVPENDPTVLFNTAGMQPLIPYLLGEVHPSGDMLVNVQKCLRTGDIDEVGDLSHLTFFEMLGNWSLGAYFKEYSVKCSFEFLTSSDYLNIPKDSLYVSVFEGDQKIPCDTETAKVWESLGIPKDRIYYLSKAHNFWGPVGSKGPCGPDTEIYVDTGKIKCSLDCNITCSCGKYFEIWNNVFMQYNKDENGNYIELDRKCVDTGMGLERTIAFLQGKSSVYDTDAFIPIIKRIEVISGKIYGQKEDDDRCIRIISDHVKAACFILADSSVVSPSNLGQGYVLRRLIRRSIRYAKKLGIKSHFLADLVDSIETIYGSFYNELTEKKDFIKKELSTEEEKFFKTLFQGEQEFIKITRNLPSKTIPGDIAFKLYDTYGFPYEVTEELAFEYGFNIDKVGFDEYFKKHQKTSKKGGDKVFKGGLADYTYETTRLHTATHLLHKALQLVLGDHVRQKGSNITAERLRFDFVHSEKMTDDEIKKVEEIVNLQIKNSLSVKKSIMELSEAQKKGAMALFGEKYDNLVSVYEIDGFSLEVCGGPHVENTNELGTFKIQKEQSSSSGIRRIKAILIDK</sequence>
<protein>
    <recommendedName>
        <fullName>Alanine--tRNA ligase</fullName>
        <ecNumber>6.1.1.7</ecNumber>
    </recommendedName>
    <alternativeName>
        <fullName>Alanyl-tRNA synthetase</fullName>
        <shortName>AlaRS</shortName>
    </alternativeName>
</protein>
<keyword id="KW-0030">Aminoacyl-tRNA synthetase</keyword>
<keyword id="KW-0067">ATP-binding</keyword>
<keyword id="KW-0963">Cytoplasm</keyword>
<keyword id="KW-0436">Ligase</keyword>
<keyword id="KW-0479">Metal-binding</keyword>
<keyword id="KW-0547">Nucleotide-binding</keyword>
<keyword id="KW-0648">Protein biosynthesis</keyword>
<keyword id="KW-0694">RNA-binding</keyword>
<keyword id="KW-0820">tRNA-binding</keyword>
<keyword id="KW-0862">Zinc</keyword>
<evidence type="ECO:0000250" key="1"/>
<evidence type="ECO:0000255" key="2"/>
<evidence type="ECO:0000305" key="3"/>
<organism>
    <name type="scientific">Borrelia garinii subsp. bavariensis (strain ATCC BAA-2496 / DSM 23469 / PBi)</name>
    <name type="common">Borreliella bavariensis</name>
    <dbReference type="NCBI Taxonomy" id="290434"/>
    <lineage>
        <taxon>Bacteria</taxon>
        <taxon>Pseudomonadati</taxon>
        <taxon>Spirochaetota</taxon>
        <taxon>Spirochaetia</taxon>
        <taxon>Spirochaetales</taxon>
        <taxon>Borreliaceae</taxon>
        <taxon>Borreliella</taxon>
    </lineage>
</organism>
<reference key="1">
    <citation type="journal article" date="2004" name="Nucleic Acids Res.">
        <title>Comparative analysis of the Borrelia garinii genome.</title>
        <authorList>
            <person name="Gloeckner G."/>
            <person name="Lehmann R."/>
            <person name="Romualdi A."/>
            <person name="Pradella S."/>
            <person name="Schulte-Spechtel U."/>
            <person name="Schilhabel M."/>
            <person name="Wilske B."/>
            <person name="Suehnel J."/>
            <person name="Platzer M."/>
        </authorList>
    </citation>
    <scope>NUCLEOTIDE SEQUENCE [LARGE SCALE GENOMIC DNA]</scope>
    <source>
        <strain>ATCC BAA-2496 / DSM 23469 / PBi</strain>
    </source>
</reference>